<protein>
    <recommendedName>
        <fullName>Histone H2B</fullName>
    </recommendedName>
</protein>
<organism>
    <name type="scientific">Aspergillus niger (strain ATCC MYA-4892 / CBS 513.88 / FGSC A1513)</name>
    <dbReference type="NCBI Taxonomy" id="425011"/>
    <lineage>
        <taxon>Eukaryota</taxon>
        <taxon>Fungi</taxon>
        <taxon>Dikarya</taxon>
        <taxon>Ascomycota</taxon>
        <taxon>Pezizomycotina</taxon>
        <taxon>Eurotiomycetes</taxon>
        <taxon>Eurotiomycetidae</taxon>
        <taxon>Eurotiales</taxon>
        <taxon>Aspergillaceae</taxon>
        <taxon>Aspergillus</taxon>
        <taxon>Aspergillus subgen. Circumdati</taxon>
    </lineage>
</organism>
<comment type="function">
    <text>Core component of nucleosome. Nucleosomes wrap and compact DNA into chromatin, limiting DNA accessibility to the cellular machineries which require DNA as a template. Histones thereby play a central role in transcription regulation, DNA repair, DNA replication and chromosomal stability. DNA accessibility is regulated via a complex set of post-translational modifications of histones, also called histone code, and nucleosome remodeling.</text>
</comment>
<comment type="subunit">
    <text>The nucleosome is a histone octamer containing two molecules each of H2A, H2B, H3 and H4 assembled in one H3-H4 heterotetramer and two H2A-H2B heterodimers. The octamer wraps approximately 147 bp of DNA.</text>
</comment>
<comment type="subcellular location">
    <subcellularLocation>
        <location evidence="1">Nucleus</location>
    </subcellularLocation>
    <subcellularLocation>
        <location evidence="1">Chromosome</location>
    </subcellularLocation>
</comment>
<comment type="PTM">
    <text evidence="1">Monoubiquitinated by the ubc2-bre1 complex to form H2BK123ub1. H2BK123ub1 gives a specific tag for epigenetic transcriptional activation and is also prerequisite for H3K4me and H3K79me formation. H2BK123ub1 also modulates the formation of double-strand breaks during meiosis and is a prerequisite for DNA-damage checkpoint activation (By similarity).</text>
</comment>
<comment type="PTM">
    <text evidence="1">Acetylated by gcn5 to form H2BK11ac and H2BK16ac. H2BK16ac can also be formed by esa1. Acetylation of N-terminal lysines and particularly formation of H2BK11acK16ac has a positive effect on transcription (By similarity).</text>
</comment>
<comment type="PTM">
    <text evidence="1">Sumoylation to form H2BK6su or H2BK7su, and probably also H2BK16su or H2BK17su, occurs preferentially near the telomeres and represses gene transcription.</text>
</comment>
<comment type="similarity">
    <text evidence="3">Belongs to the histone H2B family.</text>
</comment>
<comment type="caution">
    <text evidence="3">To ensure consistency between histone entries, we follow the 'Brno' nomenclature for histone modifications, with positions referring to those used in the literature for the 'closest' model organism. Due to slight variations in histone sequences between organisms and to the presence of initiator methionine in UniProtKB/Swiss-Prot sequences, the actual positions of modified amino acids in the sequence generally differ. In this entry the following conventions are used: H2BK6ac = acetylated Lys-8; H2BK6su = sumoylated Lys-8; H2BK7ac = acetylated Lys-9; H2BK7su = sumoylated Lys-9; H2BK11ac = acetylated Lys-15; H2BK16ac = acetylated Lys-26; H2BK16su = sumoylated Lys-26; H2BK17su = sumoylated Lys-27; H2BK123ub1 = monoubiquitinated Lys-135.</text>
</comment>
<feature type="initiator methionine" description="Removed" evidence="1">
    <location>
        <position position="1"/>
    </location>
</feature>
<feature type="chain" id="PRO_0000297846" description="Histone H2B">
    <location>
        <begin position="2"/>
        <end position="141"/>
    </location>
</feature>
<feature type="region of interest" description="Disordered" evidence="2">
    <location>
        <begin position="1"/>
        <end position="49"/>
    </location>
</feature>
<feature type="compositionally biased region" description="Basic and acidic residues" evidence="2">
    <location>
        <begin position="1"/>
        <end position="10"/>
    </location>
</feature>
<feature type="compositionally biased region" description="Low complexity" evidence="2">
    <location>
        <begin position="11"/>
        <end position="22"/>
    </location>
</feature>
<feature type="modified residue" description="N6-acetyllysine; alternate" evidence="1">
    <location>
        <position position="8"/>
    </location>
</feature>
<feature type="modified residue" description="N6-acetyllysine; alternate" evidence="1">
    <location>
        <position position="9"/>
    </location>
</feature>
<feature type="modified residue" description="N6-acetyllysine" evidence="1">
    <location>
        <position position="15"/>
    </location>
</feature>
<feature type="modified residue" description="N6-acetyllysine; alternate" evidence="1">
    <location>
        <position position="26"/>
    </location>
</feature>
<feature type="cross-link" description="Glycyl lysine isopeptide (Lys-Gly) (interchain with G-Cter in SUMO); alternate" evidence="1">
    <location>
        <position position="8"/>
    </location>
</feature>
<feature type="cross-link" description="Glycyl lysine isopeptide (Lys-Gly) (interchain with G-Cter in SUMO); alternate" evidence="1">
    <location>
        <position position="9"/>
    </location>
</feature>
<feature type="cross-link" description="Glycyl lysine isopeptide (Lys-Gly) (interchain with G-Cter in SUMO); alternate" evidence="1">
    <location>
        <position position="26"/>
    </location>
</feature>
<feature type="cross-link" description="Glycyl lysine isopeptide (Lys-Gly) (interchain with G-Cter in SUMO)" evidence="1">
    <location>
        <position position="27"/>
    </location>
</feature>
<feature type="cross-link" description="Glycyl lysine isopeptide (Lys-Gly) (interchain with G-Cter in ubiquitin)" evidence="1">
    <location>
        <position position="135"/>
    </location>
</feature>
<proteinExistence type="inferred from homology"/>
<evidence type="ECO:0000250" key="1"/>
<evidence type="ECO:0000256" key="2">
    <source>
        <dbReference type="SAM" id="MobiDB-lite"/>
    </source>
</evidence>
<evidence type="ECO:0000305" key="3"/>
<keyword id="KW-0007">Acetylation</keyword>
<keyword id="KW-0158">Chromosome</keyword>
<keyword id="KW-0238">DNA-binding</keyword>
<keyword id="KW-1017">Isopeptide bond</keyword>
<keyword id="KW-0544">Nucleosome core</keyword>
<keyword id="KW-0539">Nucleus</keyword>
<keyword id="KW-1185">Reference proteome</keyword>
<keyword id="KW-0832">Ubl conjugation</keyword>
<reference key="1">
    <citation type="journal article" date="2007" name="Nat. Biotechnol.">
        <title>Genome sequencing and analysis of the versatile cell factory Aspergillus niger CBS 513.88.</title>
        <authorList>
            <person name="Pel H.J."/>
            <person name="de Winde J.H."/>
            <person name="Archer D.B."/>
            <person name="Dyer P.S."/>
            <person name="Hofmann G."/>
            <person name="Schaap P.J."/>
            <person name="Turner G."/>
            <person name="de Vries R.P."/>
            <person name="Albang R."/>
            <person name="Albermann K."/>
            <person name="Andersen M.R."/>
            <person name="Bendtsen J.D."/>
            <person name="Benen J.A.E."/>
            <person name="van den Berg M."/>
            <person name="Breestraat S."/>
            <person name="Caddick M.X."/>
            <person name="Contreras R."/>
            <person name="Cornell M."/>
            <person name="Coutinho P.M."/>
            <person name="Danchin E.G.J."/>
            <person name="Debets A.J.M."/>
            <person name="Dekker P."/>
            <person name="van Dijck P.W.M."/>
            <person name="van Dijk A."/>
            <person name="Dijkhuizen L."/>
            <person name="Driessen A.J.M."/>
            <person name="d'Enfert C."/>
            <person name="Geysens S."/>
            <person name="Goosen C."/>
            <person name="Groot G.S.P."/>
            <person name="de Groot P.W.J."/>
            <person name="Guillemette T."/>
            <person name="Henrissat B."/>
            <person name="Herweijer M."/>
            <person name="van den Hombergh J.P.T.W."/>
            <person name="van den Hondel C.A.M.J.J."/>
            <person name="van der Heijden R.T.J.M."/>
            <person name="van der Kaaij R.M."/>
            <person name="Klis F.M."/>
            <person name="Kools H.J."/>
            <person name="Kubicek C.P."/>
            <person name="van Kuyk P.A."/>
            <person name="Lauber J."/>
            <person name="Lu X."/>
            <person name="van der Maarel M.J.E.C."/>
            <person name="Meulenberg R."/>
            <person name="Menke H."/>
            <person name="Mortimer M.A."/>
            <person name="Nielsen J."/>
            <person name="Oliver S.G."/>
            <person name="Olsthoorn M."/>
            <person name="Pal K."/>
            <person name="van Peij N.N.M.E."/>
            <person name="Ram A.F.J."/>
            <person name="Rinas U."/>
            <person name="Roubos J.A."/>
            <person name="Sagt C.M.J."/>
            <person name="Schmoll M."/>
            <person name="Sun J."/>
            <person name="Ussery D."/>
            <person name="Varga J."/>
            <person name="Vervecken W."/>
            <person name="van de Vondervoort P.J.J."/>
            <person name="Wedler H."/>
            <person name="Woesten H.A.B."/>
            <person name="Zeng A.-P."/>
            <person name="van Ooyen A.J.J."/>
            <person name="Visser J."/>
            <person name="Stam H."/>
        </authorList>
    </citation>
    <scope>NUCLEOTIDE SEQUENCE [LARGE SCALE GENOMIC DNA]</scope>
    <source>
        <strain>ATCC MYA-4892 / CBS 513.88 / FGSC A1513</strain>
    </source>
</reference>
<sequence length="141" mass="14998">MPPKAAEKKPSTGGKAPAGGKAPAEKKEAGKKTAAAASGDKKKRGKTRKETYSSYIYKVLKQVHPDTGISTRAMSILNSFVNDIFERVATEASKLAAYNKKSTISSREIQTSVRLILPGELAKHAVSEGTKAVTKYSSSAK</sequence>
<dbReference type="EMBL" id="AM270257">
    <property type="protein sequence ID" value="CAK40929.1"/>
    <property type="molecule type" value="Genomic_DNA"/>
</dbReference>
<dbReference type="RefSeq" id="XP_001395088.1">
    <property type="nucleotide sequence ID" value="XM_001395051.2"/>
</dbReference>
<dbReference type="SMR" id="A2QY49"/>
<dbReference type="EnsemblFungi" id="CAK40929">
    <property type="protein sequence ID" value="CAK40929"/>
    <property type="gene ID" value="An11g11310"/>
</dbReference>
<dbReference type="GeneID" id="4985348"/>
<dbReference type="KEGG" id="ang:An11g11310"/>
<dbReference type="VEuPathDB" id="FungiDB:An11g11310"/>
<dbReference type="HOGENOM" id="CLU_075666_1_3_1"/>
<dbReference type="Proteomes" id="UP000006706">
    <property type="component" value="Chromosome 7R"/>
</dbReference>
<dbReference type="GO" id="GO:0000786">
    <property type="term" value="C:nucleosome"/>
    <property type="evidence" value="ECO:0007669"/>
    <property type="project" value="UniProtKB-KW"/>
</dbReference>
<dbReference type="GO" id="GO:0005634">
    <property type="term" value="C:nucleus"/>
    <property type="evidence" value="ECO:0007669"/>
    <property type="project" value="UniProtKB-SubCell"/>
</dbReference>
<dbReference type="GO" id="GO:0003677">
    <property type="term" value="F:DNA binding"/>
    <property type="evidence" value="ECO:0007669"/>
    <property type="project" value="UniProtKB-KW"/>
</dbReference>
<dbReference type="GO" id="GO:0046982">
    <property type="term" value="F:protein heterodimerization activity"/>
    <property type="evidence" value="ECO:0007669"/>
    <property type="project" value="InterPro"/>
</dbReference>
<dbReference type="GO" id="GO:0030527">
    <property type="term" value="F:structural constituent of chromatin"/>
    <property type="evidence" value="ECO:0007669"/>
    <property type="project" value="InterPro"/>
</dbReference>
<dbReference type="CDD" id="cd22910">
    <property type="entry name" value="HFD_H2B"/>
    <property type="match status" value="1"/>
</dbReference>
<dbReference type="FunFam" id="1.10.20.10:FF:000014">
    <property type="entry name" value="Histone H2B"/>
    <property type="match status" value="1"/>
</dbReference>
<dbReference type="Gene3D" id="1.10.20.10">
    <property type="entry name" value="Histone, subunit A"/>
    <property type="match status" value="1"/>
</dbReference>
<dbReference type="InterPro" id="IPR009072">
    <property type="entry name" value="Histone-fold"/>
</dbReference>
<dbReference type="InterPro" id="IPR007125">
    <property type="entry name" value="Histone_H2A/H2B/H3"/>
</dbReference>
<dbReference type="InterPro" id="IPR000558">
    <property type="entry name" value="Histone_H2B"/>
</dbReference>
<dbReference type="InterPro" id="IPR055333">
    <property type="entry name" value="HISTONE_H2B_site"/>
</dbReference>
<dbReference type="PANTHER" id="PTHR23428">
    <property type="entry name" value="HISTONE H2B"/>
    <property type="match status" value="1"/>
</dbReference>
<dbReference type="Pfam" id="PF00125">
    <property type="entry name" value="Histone"/>
    <property type="match status" value="1"/>
</dbReference>
<dbReference type="PRINTS" id="PR00621">
    <property type="entry name" value="HISTONEH2B"/>
</dbReference>
<dbReference type="SMART" id="SM00427">
    <property type="entry name" value="H2B"/>
    <property type="match status" value="1"/>
</dbReference>
<dbReference type="SUPFAM" id="SSF47113">
    <property type="entry name" value="Histone-fold"/>
    <property type="match status" value="1"/>
</dbReference>
<dbReference type="PROSITE" id="PS00357">
    <property type="entry name" value="HISTONE_H2B"/>
    <property type="match status" value="1"/>
</dbReference>
<accession>A2QY49</accession>
<name>H2B_ASPNC</name>
<gene>
    <name type="primary">htb1</name>
    <name type="ORF">An11g11310</name>
</gene>